<name>PNP_BACCQ</name>
<gene>
    <name evidence="1" type="primary">pnp</name>
    <name type="ordered locus">BCQ_3592</name>
</gene>
<protein>
    <recommendedName>
        <fullName evidence="1">Polyribonucleotide nucleotidyltransferase</fullName>
        <ecNumber evidence="1">2.7.7.8</ecNumber>
    </recommendedName>
    <alternativeName>
        <fullName evidence="1">Polynucleotide phosphorylase</fullName>
        <shortName evidence="1">PNPase</shortName>
    </alternativeName>
</protein>
<dbReference type="EC" id="2.7.7.8" evidence="1"/>
<dbReference type="EMBL" id="CP000227">
    <property type="protein sequence ID" value="ACM14020.1"/>
    <property type="molecule type" value="Genomic_DNA"/>
</dbReference>
<dbReference type="SMR" id="B9IV96"/>
<dbReference type="KEGG" id="bcq:BCQ_3592"/>
<dbReference type="HOGENOM" id="CLU_004217_2_2_9"/>
<dbReference type="Proteomes" id="UP000000441">
    <property type="component" value="Chromosome"/>
</dbReference>
<dbReference type="GO" id="GO:0005829">
    <property type="term" value="C:cytosol"/>
    <property type="evidence" value="ECO:0007669"/>
    <property type="project" value="TreeGrafter"/>
</dbReference>
<dbReference type="GO" id="GO:0000175">
    <property type="term" value="F:3'-5'-RNA exonuclease activity"/>
    <property type="evidence" value="ECO:0007669"/>
    <property type="project" value="TreeGrafter"/>
</dbReference>
<dbReference type="GO" id="GO:0000287">
    <property type="term" value="F:magnesium ion binding"/>
    <property type="evidence" value="ECO:0007669"/>
    <property type="project" value="UniProtKB-UniRule"/>
</dbReference>
<dbReference type="GO" id="GO:0004654">
    <property type="term" value="F:polyribonucleotide nucleotidyltransferase activity"/>
    <property type="evidence" value="ECO:0007669"/>
    <property type="project" value="UniProtKB-UniRule"/>
</dbReference>
<dbReference type="GO" id="GO:0003723">
    <property type="term" value="F:RNA binding"/>
    <property type="evidence" value="ECO:0007669"/>
    <property type="project" value="UniProtKB-UniRule"/>
</dbReference>
<dbReference type="GO" id="GO:0006402">
    <property type="term" value="P:mRNA catabolic process"/>
    <property type="evidence" value="ECO:0007669"/>
    <property type="project" value="UniProtKB-UniRule"/>
</dbReference>
<dbReference type="GO" id="GO:0006396">
    <property type="term" value="P:RNA processing"/>
    <property type="evidence" value="ECO:0007669"/>
    <property type="project" value="InterPro"/>
</dbReference>
<dbReference type="CDD" id="cd02393">
    <property type="entry name" value="KH-I_PNPase"/>
    <property type="match status" value="1"/>
</dbReference>
<dbReference type="CDD" id="cd11363">
    <property type="entry name" value="RNase_PH_PNPase_1"/>
    <property type="match status" value="1"/>
</dbReference>
<dbReference type="CDD" id="cd11364">
    <property type="entry name" value="RNase_PH_PNPase_2"/>
    <property type="match status" value="1"/>
</dbReference>
<dbReference type="CDD" id="cd04472">
    <property type="entry name" value="S1_PNPase"/>
    <property type="match status" value="1"/>
</dbReference>
<dbReference type="FunFam" id="2.40.50.140:FF:000023">
    <property type="entry name" value="Polyribonucleotide nucleotidyltransferase"/>
    <property type="match status" value="1"/>
</dbReference>
<dbReference type="FunFam" id="3.30.1370.10:FF:000001">
    <property type="entry name" value="Polyribonucleotide nucleotidyltransferase"/>
    <property type="match status" value="1"/>
</dbReference>
<dbReference type="FunFam" id="3.30.230.70:FF:000001">
    <property type="entry name" value="Polyribonucleotide nucleotidyltransferase"/>
    <property type="match status" value="1"/>
</dbReference>
<dbReference type="FunFam" id="3.30.230.70:FF:000002">
    <property type="entry name" value="Polyribonucleotide nucleotidyltransferase"/>
    <property type="match status" value="1"/>
</dbReference>
<dbReference type="Gene3D" id="3.30.230.70">
    <property type="entry name" value="GHMP Kinase, N-terminal domain"/>
    <property type="match status" value="2"/>
</dbReference>
<dbReference type="Gene3D" id="3.30.1370.10">
    <property type="entry name" value="K Homology domain, type 1"/>
    <property type="match status" value="1"/>
</dbReference>
<dbReference type="Gene3D" id="2.40.50.140">
    <property type="entry name" value="Nucleic acid-binding proteins"/>
    <property type="match status" value="1"/>
</dbReference>
<dbReference type="HAMAP" id="MF_01595">
    <property type="entry name" value="PNPase"/>
    <property type="match status" value="1"/>
</dbReference>
<dbReference type="InterPro" id="IPR001247">
    <property type="entry name" value="ExoRNase_PH_dom1"/>
</dbReference>
<dbReference type="InterPro" id="IPR015847">
    <property type="entry name" value="ExoRNase_PH_dom2"/>
</dbReference>
<dbReference type="InterPro" id="IPR036345">
    <property type="entry name" value="ExoRNase_PH_dom2_sf"/>
</dbReference>
<dbReference type="InterPro" id="IPR004087">
    <property type="entry name" value="KH_dom"/>
</dbReference>
<dbReference type="InterPro" id="IPR004088">
    <property type="entry name" value="KH_dom_type_1"/>
</dbReference>
<dbReference type="InterPro" id="IPR036612">
    <property type="entry name" value="KH_dom_type_1_sf"/>
</dbReference>
<dbReference type="InterPro" id="IPR012340">
    <property type="entry name" value="NA-bd_OB-fold"/>
</dbReference>
<dbReference type="InterPro" id="IPR012162">
    <property type="entry name" value="PNPase"/>
</dbReference>
<dbReference type="InterPro" id="IPR027408">
    <property type="entry name" value="PNPase/RNase_PH_dom_sf"/>
</dbReference>
<dbReference type="InterPro" id="IPR015848">
    <property type="entry name" value="PNPase_PH_RNA-bd_bac/org-type"/>
</dbReference>
<dbReference type="InterPro" id="IPR020568">
    <property type="entry name" value="Ribosomal_Su5_D2-typ_SF"/>
</dbReference>
<dbReference type="InterPro" id="IPR003029">
    <property type="entry name" value="S1_domain"/>
</dbReference>
<dbReference type="NCBIfam" id="TIGR03591">
    <property type="entry name" value="polynuc_phos"/>
    <property type="match status" value="1"/>
</dbReference>
<dbReference type="NCBIfam" id="NF008805">
    <property type="entry name" value="PRK11824.1"/>
    <property type="match status" value="1"/>
</dbReference>
<dbReference type="PANTHER" id="PTHR11252">
    <property type="entry name" value="POLYRIBONUCLEOTIDE NUCLEOTIDYLTRANSFERASE"/>
    <property type="match status" value="1"/>
</dbReference>
<dbReference type="PANTHER" id="PTHR11252:SF0">
    <property type="entry name" value="POLYRIBONUCLEOTIDE NUCLEOTIDYLTRANSFERASE 1, MITOCHONDRIAL"/>
    <property type="match status" value="1"/>
</dbReference>
<dbReference type="Pfam" id="PF00013">
    <property type="entry name" value="KH_1"/>
    <property type="match status" value="1"/>
</dbReference>
<dbReference type="Pfam" id="PF03726">
    <property type="entry name" value="PNPase"/>
    <property type="match status" value="1"/>
</dbReference>
<dbReference type="Pfam" id="PF01138">
    <property type="entry name" value="RNase_PH"/>
    <property type="match status" value="2"/>
</dbReference>
<dbReference type="Pfam" id="PF03725">
    <property type="entry name" value="RNase_PH_C"/>
    <property type="match status" value="2"/>
</dbReference>
<dbReference type="Pfam" id="PF00575">
    <property type="entry name" value="S1"/>
    <property type="match status" value="1"/>
</dbReference>
<dbReference type="PIRSF" id="PIRSF005499">
    <property type="entry name" value="PNPase"/>
    <property type="match status" value="1"/>
</dbReference>
<dbReference type="SMART" id="SM00322">
    <property type="entry name" value="KH"/>
    <property type="match status" value="1"/>
</dbReference>
<dbReference type="SMART" id="SM00316">
    <property type="entry name" value="S1"/>
    <property type="match status" value="1"/>
</dbReference>
<dbReference type="SUPFAM" id="SSF54791">
    <property type="entry name" value="Eukaryotic type KH-domain (KH-domain type I)"/>
    <property type="match status" value="1"/>
</dbReference>
<dbReference type="SUPFAM" id="SSF50249">
    <property type="entry name" value="Nucleic acid-binding proteins"/>
    <property type="match status" value="1"/>
</dbReference>
<dbReference type="SUPFAM" id="SSF55666">
    <property type="entry name" value="Ribonuclease PH domain 2-like"/>
    <property type="match status" value="2"/>
</dbReference>
<dbReference type="SUPFAM" id="SSF54211">
    <property type="entry name" value="Ribosomal protein S5 domain 2-like"/>
    <property type="match status" value="2"/>
</dbReference>
<dbReference type="PROSITE" id="PS50084">
    <property type="entry name" value="KH_TYPE_1"/>
    <property type="match status" value="1"/>
</dbReference>
<dbReference type="PROSITE" id="PS50126">
    <property type="entry name" value="S1"/>
    <property type="match status" value="1"/>
</dbReference>
<feature type="chain" id="PRO_1000185722" description="Polyribonucleotide nucleotidyltransferase">
    <location>
        <begin position="1"/>
        <end position="712"/>
    </location>
</feature>
<feature type="domain" description="KH" evidence="1">
    <location>
        <begin position="554"/>
        <end position="613"/>
    </location>
</feature>
<feature type="domain" description="S1 motif" evidence="1">
    <location>
        <begin position="623"/>
        <end position="691"/>
    </location>
</feature>
<feature type="binding site" evidence="1">
    <location>
        <position position="487"/>
    </location>
    <ligand>
        <name>Mg(2+)</name>
        <dbReference type="ChEBI" id="CHEBI:18420"/>
    </ligand>
</feature>
<feature type="binding site" evidence="1">
    <location>
        <position position="493"/>
    </location>
    <ligand>
        <name>Mg(2+)</name>
        <dbReference type="ChEBI" id="CHEBI:18420"/>
    </ligand>
</feature>
<proteinExistence type="inferred from homology"/>
<comment type="function">
    <text evidence="1">Involved in mRNA degradation. Catalyzes the phosphorolysis of single-stranded polyribonucleotides processively in the 3'- to 5'-direction.</text>
</comment>
<comment type="catalytic activity">
    <reaction evidence="1">
        <text>RNA(n+1) + phosphate = RNA(n) + a ribonucleoside 5'-diphosphate</text>
        <dbReference type="Rhea" id="RHEA:22096"/>
        <dbReference type="Rhea" id="RHEA-COMP:14527"/>
        <dbReference type="Rhea" id="RHEA-COMP:17342"/>
        <dbReference type="ChEBI" id="CHEBI:43474"/>
        <dbReference type="ChEBI" id="CHEBI:57930"/>
        <dbReference type="ChEBI" id="CHEBI:140395"/>
        <dbReference type="EC" id="2.7.7.8"/>
    </reaction>
</comment>
<comment type="cofactor">
    <cofactor evidence="1">
        <name>Mg(2+)</name>
        <dbReference type="ChEBI" id="CHEBI:18420"/>
    </cofactor>
</comment>
<comment type="subcellular location">
    <subcellularLocation>
        <location evidence="1">Cytoplasm</location>
    </subcellularLocation>
</comment>
<comment type="similarity">
    <text evidence="1">Belongs to the polyribonucleotide nucleotidyltransferase family.</text>
</comment>
<evidence type="ECO:0000255" key="1">
    <source>
        <dbReference type="HAMAP-Rule" id="MF_01595"/>
    </source>
</evidence>
<accession>B9IV96</accession>
<organism>
    <name type="scientific">Bacillus cereus (strain Q1)</name>
    <dbReference type="NCBI Taxonomy" id="361100"/>
    <lineage>
        <taxon>Bacteria</taxon>
        <taxon>Bacillati</taxon>
        <taxon>Bacillota</taxon>
        <taxon>Bacilli</taxon>
        <taxon>Bacillales</taxon>
        <taxon>Bacillaceae</taxon>
        <taxon>Bacillus</taxon>
        <taxon>Bacillus cereus group</taxon>
    </lineage>
</organism>
<reference key="1">
    <citation type="journal article" date="2009" name="J. Bacteriol.">
        <title>Complete genome sequence of the extremophilic Bacillus cereus strain Q1 with industrial applications.</title>
        <authorList>
            <person name="Xiong Z."/>
            <person name="Jiang Y."/>
            <person name="Qi D."/>
            <person name="Lu H."/>
            <person name="Yang F."/>
            <person name="Yang J."/>
            <person name="Chen L."/>
            <person name="Sun L."/>
            <person name="Xu X."/>
            <person name="Xue Y."/>
            <person name="Zhu Y."/>
            <person name="Jin Q."/>
        </authorList>
    </citation>
    <scope>NUCLEOTIDE SEQUENCE [LARGE SCALE GENOMIC DNA]</scope>
    <source>
        <strain>Q1</strain>
    </source>
</reference>
<keyword id="KW-0963">Cytoplasm</keyword>
<keyword id="KW-0460">Magnesium</keyword>
<keyword id="KW-0479">Metal-binding</keyword>
<keyword id="KW-0548">Nucleotidyltransferase</keyword>
<keyword id="KW-0694">RNA-binding</keyword>
<keyword id="KW-0808">Transferase</keyword>
<sequence>MSQEKQVFSIDLAGRQLTVETGQLAKQANGAVLVRYGDTAVLSTATASKEAKNVDFFPLTVNYEERLYAVGKIPGGFIKREGRPSEKAILASRLIDRPIRPLFADGFRNEVQVVSIVMSVDQDCSSEMAAMLGSSLALSISDIPFEGPIAGATVGRINGEFVINPTVEQQEQSDIHLVVAGTKDAINMVEAGADQVPEETMLEAIMFGHDEIKRLIAFQEEIVQAVGKEKSEVKLYEVDADLNQAVREMAEKDMHSAIQVHEKHAREDAINEVKKRVIEHYEAQEADADTLGQVNEILYKIVKEEVRRLITVEKIRPDGRKGDEIRPLASEVGILSRTHGSGLFTRGQTQALSICTLGALGDVQILDGLGVEESKRFMHHYNFPSFSVGETRPMRGPGRREIGHGALGERALEPVIPSEKDFPYTVRLVSEVLESNGSTSQASICGSTLAMMDAGVPLKAPVAGIAMGLVKSGEHYTILTDIQGMEDHLGDMDFKVAGTAHGVTALQMDIKIDGLSREILEEALQQAKVGRMHILDHMLSVIAEPRTELSAYAPKIITMTINPDKIRDVIGPSGKQINKIIEETGVKIDIEQDGTVFISSINQEMNDKAKKIIEDIVREVQVGEIYEGKVKRVEKFGAFVELFSGKDGLVHISELALERVGKVEDVVKIGDVITVKVIEIDKQGRVNLSRKVLLKEEQEKEAAKEENKQEQQ</sequence>